<comment type="function">
    <text evidence="1">Guanylyl cyclase that catalyzes synthesis of cyclic GMP (cGMP) from GTP.</text>
</comment>
<comment type="catalytic activity">
    <reaction evidence="1">
        <text>GTP = 3',5'-cyclic GMP + diphosphate</text>
        <dbReference type="Rhea" id="RHEA:13665"/>
        <dbReference type="ChEBI" id="CHEBI:33019"/>
        <dbReference type="ChEBI" id="CHEBI:37565"/>
        <dbReference type="ChEBI" id="CHEBI:57746"/>
        <dbReference type="EC" id="4.6.1.2"/>
    </reaction>
    <physiologicalReaction direction="left-to-right" evidence="1">
        <dbReference type="Rhea" id="RHEA:13666"/>
    </physiologicalReaction>
</comment>
<comment type="subunit">
    <text evidence="1">Homotrimer. Interacts via its C-terminal region with NHERF4. Interacts with the lectin chaperone VIP36.</text>
</comment>
<comment type="subcellular location">
    <subcellularLocation>
        <location evidence="1">Cell membrane</location>
        <topology evidence="1">Single-pass type I membrane protein</topology>
    </subcellularLocation>
    <subcellularLocation>
        <location evidence="1">Endoplasmic reticulum membrane</location>
        <topology evidence="1">Single-pass type I membrane protein</topology>
    </subcellularLocation>
    <text evidence="1">The 145 kDa plasma membrane form of GUCY2C contains sialic acid and galactose residues, while a differencially glycosylated 130 Kda form is a high mannose form that is resident in the endoplasmic reticulum and may serve as the precursor for the cell surface form.</text>
</comment>
<comment type="domain">
    <text evidence="5">The protein kinase domain is predicted to be catalytically inactive.</text>
</comment>
<comment type="PTM">
    <text evidence="1">Glycosylation at Asn-62 is required for interaction with VIP36 while glycosylation at Asn-348 and Asn-405 modulates ligand-mediated GC-C activation.</text>
</comment>
<comment type="similarity">
    <text evidence="3">Belongs to the adenylyl cyclase class-4/guanylyl cyclase family.</text>
</comment>
<proteinExistence type="evidence at transcript level"/>
<feature type="signal peptide" evidence="2">
    <location>
        <begin position="1"/>
        <end position="23"/>
    </location>
</feature>
<feature type="chain" id="PRO_0000012375" description="Guanylyl cyclase C">
    <location>
        <begin position="24"/>
        <end position="1076"/>
    </location>
</feature>
<feature type="topological domain" description="Extracellular" evidence="2">
    <location>
        <begin position="24"/>
        <end position="433"/>
    </location>
</feature>
<feature type="transmembrane region" description="Helical" evidence="2">
    <location>
        <begin position="434"/>
        <end position="457"/>
    </location>
</feature>
<feature type="topological domain" description="Cytoplasmic" evidence="2">
    <location>
        <begin position="458"/>
        <end position="1076"/>
    </location>
</feature>
<feature type="domain" description="Protein kinase" evidence="4">
    <location>
        <begin position="492"/>
        <end position="752"/>
    </location>
</feature>
<feature type="domain" description="Guanylate cyclase" evidence="3">
    <location>
        <begin position="827"/>
        <end position="957"/>
    </location>
</feature>
<feature type="glycosylation site" description="N-linked (GlcNAc...) asparagine" evidence="2">
    <location>
        <position position="35"/>
    </location>
</feature>
<feature type="glycosylation site" description="N-linked (GlcNAc...) asparagine" evidence="2">
    <location>
        <position position="82"/>
    </location>
</feature>
<feature type="glycosylation site" description="N-linked (GlcNAc...) asparagine" evidence="2">
    <location>
        <position position="191"/>
    </location>
</feature>
<feature type="glycosylation site" description="N-linked (GlcNAc...) asparagine" evidence="2">
    <location>
        <position position="198"/>
    </location>
</feature>
<feature type="glycosylation site" description="N-linked (GlcNAc...) asparagine" evidence="2">
    <location>
        <position position="287"/>
    </location>
</feature>
<feature type="glycosylation site" description="N-linked (GlcNAc...) asparagine" evidence="2">
    <location>
        <position position="306"/>
    </location>
</feature>
<feature type="glycosylation site" description="N-linked (GlcNAc...) asparagine" evidence="2">
    <location>
        <position position="310"/>
    </location>
</feature>
<feature type="glycosylation site" description="N-linked (GlcNAc...) asparagine" evidence="2">
    <location>
        <position position="348"/>
    </location>
</feature>
<feature type="glycosylation site" description="N-linked (GlcNAc...) asparagine" evidence="2">
    <location>
        <position position="405"/>
    </location>
</feature>
<accession>P70106</accession>
<reference key="1">
    <citation type="submission" date="1996-08" db="EMBL/GenBank/DDBJ databases">
        <title>Sequence of guinea pig guanylin and guanylyl cyclase C (GC-C) cDNA: expression and tissue distribution.</title>
        <authorList>
            <person name="Kruhoeffer M."/>
            <person name="Cetin Y."/>
            <person name="Kaempf U."/>
            <person name="Forssmann W.-G."/>
        </authorList>
    </citation>
    <scope>NUCLEOTIDE SEQUENCE [MRNA]</scope>
    <source>
        <tissue>Colon</tissue>
    </source>
</reference>
<evidence type="ECO:0000250" key="1">
    <source>
        <dbReference type="UniProtKB" id="P25092"/>
    </source>
</evidence>
<evidence type="ECO:0000255" key="2"/>
<evidence type="ECO:0000255" key="3">
    <source>
        <dbReference type="PROSITE-ProRule" id="PRU00099"/>
    </source>
</evidence>
<evidence type="ECO:0000255" key="4">
    <source>
        <dbReference type="PROSITE-ProRule" id="PRU00159"/>
    </source>
</evidence>
<evidence type="ECO:0000305" key="5"/>
<sequence>MKSPLLGLVVWSLLLQLLQPGLAFWNSQISQNCHNGSYEITVLMMNNYAFQESLESLKTAVNKGLDIVKQRLQEAALYVTVNATFIHSDGLIHKSGDCRSSTCEGLDLLREIARQKRMGCALMGPSCTYSTYQMYLDTELNYPMISAGSFGLSCDHKETLTRMMSPARKLMYFLVDFWKASNLPFKSFSWNTSYVFKNGTESEHCFWYINALEAGVSYFSQVLGFKEMLRGNEELQKILKDPNRRSNVIVMCGTPQTMESLKIDWTATEDTVIILVDLFNNYYLEENATAPDYMKNVLVLTLPPGNSTINTSLSKESLQEFSDFALAYLDGILLFGHMLKTFLRNGENTTAHKFAHAFRNLTFEGSTGPVTLDDSGDIDNTMVLLYTSVDTKKFKPLLFYDTRINQTTPIDTHPTFIWKNHRLPHDIPGLGPHILLIAVCTLAGVVVLILLIALLVLRKYKKDNELRQKKWSHIPPEKILPLETNEANHVSLKIDDDKKRDTVQRLRQCKYDPKRAILKDLKYSDGNFSEKQKIELDKLLPSDFYSLTKFYGTVKLDTRIFGVIEYCERGSLREVLNETISYPDGTIMGWEFKISVLYDIAKGMSYLHSSKIEVHGRLKSTNCVVDSRMVVKITDFGYNSILPPKKDLWTAPEHLRQASTSQKGDVYSFGIIAQEIIMRRETFYTLSCRDQKEKIFRVEHPDGLKPFRPDLFLETAEEKELEVFLLVKNCWEEDPEKRPDFKKIENTLAKIFGLFHDQKNESYMDTLIRRLQLYSRNLEHLVEERTQLYKAERDRADRLNFMLLPRPVVQSLKEKGIVEPELYEEVTVYFSDIVGFTTICKYSTPMEVVDMLNDLYKSFDQIVDHHDVHKVETIGDAYVVASGLPTRNGNRHAIDISKMALDILSFIGTFELEHLPGLPVWIRIGVHSGPCAAGVVGIKIPRYCLFGDTVNTASRMESTGLPLRIHMSSSTIAILKRVQCQFLYEMRGETYLKGKGTETTYCLTGMKDQEYNLPTPPTVENQQRLQAEFSDMITNSLQKRQATGIKSRKPARVASYKKGTLEYLQLNTTDQDSTYF</sequence>
<dbReference type="EC" id="4.6.1.2" evidence="1"/>
<dbReference type="EMBL" id="Z74734">
    <property type="protein sequence ID" value="CAA98989.1"/>
    <property type="molecule type" value="mRNA"/>
</dbReference>
<dbReference type="RefSeq" id="NP_001166430.1">
    <property type="nucleotide sequence ID" value="NM_001172959.2"/>
</dbReference>
<dbReference type="SMR" id="P70106"/>
<dbReference type="FunCoup" id="P70106">
    <property type="interactions" value="753"/>
</dbReference>
<dbReference type="STRING" id="10141.ENSCPOP00000007653"/>
<dbReference type="GlyCosmos" id="P70106">
    <property type="glycosylation" value="9 sites, No reported glycans"/>
</dbReference>
<dbReference type="GeneID" id="100135536"/>
<dbReference type="KEGG" id="cpoc:100135536"/>
<dbReference type="CTD" id="2984"/>
<dbReference type="eggNOG" id="KOG1023">
    <property type="taxonomic scope" value="Eukaryota"/>
</dbReference>
<dbReference type="InParanoid" id="P70106"/>
<dbReference type="OrthoDB" id="60033at2759"/>
<dbReference type="Proteomes" id="UP000005447">
    <property type="component" value="Unassembled WGS sequence"/>
</dbReference>
<dbReference type="GO" id="GO:0005789">
    <property type="term" value="C:endoplasmic reticulum membrane"/>
    <property type="evidence" value="ECO:0007669"/>
    <property type="project" value="UniProtKB-SubCell"/>
</dbReference>
<dbReference type="GO" id="GO:0005886">
    <property type="term" value="C:plasma membrane"/>
    <property type="evidence" value="ECO:0007669"/>
    <property type="project" value="UniProtKB-SubCell"/>
</dbReference>
<dbReference type="GO" id="GO:0004016">
    <property type="term" value="F:adenylate cyclase activity"/>
    <property type="evidence" value="ECO:0007669"/>
    <property type="project" value="TreeGrafter"/>
</dbReference>
<dbReference type="GO" id="GO:0005524">
    <property type="term" value="F:ATP binding"/>
    <property type="evidence" value="ECO:0007669"/>
    <property type="project" value="InterPro"/>
</dbReference>
<dbReference type="GO" id="GO:0005525">
    <property type="term" value="F:GTP binding"/>
    <property type="evidence" value="ECO:0007669"/>
    <property type="project" value="UniProtKB-KW"/>
</dbReference>
<dbReference type="GO" id="GO:0004383">
    <property type="term" value="F:guanylate cyclase activity"/>
    <property type="evidence" value="ECO:0007669"/>
    <property type="project" value="UniProtKB-EC"/>
</dbReference>
<dbReference type="GO" id="GO:0001653">
    <property type="term" value="F:peptide receptor activity"/>
    <property type="evidence" value="ECO:0007669"/>
    <property type="project" value="TreeGrafter"/>
</dbReference>
<dbReference type="GO" id="GO:0004672">
    <property type="term" value="F:protein kinase activity"/>
    <property type="evidence" value="ECO:0007669"/>
    <property type="project" value="InterPro"/>
</dbReference>
<dbReference type="GO" id="GO:0035556">
    <property type="term" value="P:intracellular signal transduction"/>
    <property type="evidence" value="ECO:0007669"/>
    <property type="project" value="InterPro"/>
</dbReference>
<dbReference type="GO" id="GO:0007168">
    <property type="term" value="P:receptor guanylyl cyclase signaling pathway"/>
    <property type="evidence" value="ECO:0007669"/>
    <property type="project" value="TreeGrafter"/>
</dbReference>
<dbReference type="CDD" id="cd07302">
    <property type="entry name" value="CHD"/>
    <property type="match status" value="1"/>
</dbReference>
<dbReference type="FunFam" id="1.10.510.10:FF:000364">
    <property type="entry name" value="Guanylate cyclase"/>
    <property type="match status" value="1"/>
</dbReference>
<dbReference type="FunFam" id="3.30.70.1230:FF:000015">
    <property type="entry name" value="Guanylate cyclase"/>
    <property type="match status" value="1"/>
</dbReference>
<dbReference type="FunFam" id="3.40.50.2300:FF:000185">
    <property type="entry name" value="Guanylate cyclase"/>
    <property type="match status" value="1"/>
</dbReference>
<dbReference type="Gene3D" id="3.40.50.2300">
    <property type="match status" value="2"/>
</dbReference>
<dbReference type="Gene3D" id="3.30.70.1230">
    <property type="entry name" value="Nucleotide cyclase"/>
    <property type="match status" value="1"/>
</dbReference>
<dbReference type="Gene3D" id="1.10.510.10">
    <property type="entry name" value="Transferase(Phosphotransferase) domain 1"/>
    <property type="match status" value="1"/>
</dbReference>
<dbReference type="InterPro" id="IPR001054">
    <property type="entry name" value="A/G_cyclase"/>
</dbReference>
<dbReference type="InterPro" id="IPR018297">
    <property type="entry name" value="A/G_cyclase_CS"/>
</dbReference>
<dbReference type="InterPro" id="IPR001828">
    <property type="entry name" value="ANF_lig-bd_rcpt"/>
</dbReference>
<dbReference type="InterPro" id="IPR050401">
    <property type="entry name" value="Cyclic_nucleotide_synthase"/>
</dbReference>
<dbReference type="InterPro" id="IPR011009">
    <property type="entry name" value="Kinase-like_dom_sf"/>
</dbReference>
<dbReference type="InterPro" id="IPR029787">
    <property type="entry name" value="Nucleotide_cyclase"/>
</dbReference>
<dbReference type="InterPro" id="IPR028082">
    <property type="entry name" value="Peripla_BP_I"/>
</dbReference>
<dbReference type="InterPro" id="IPR000719">
    <property type="entry name" value="Prot_kinase_dom"/>
</dbReference>
<dbReference type="InterPro" id="IPR001245">
    <property type="entry name" value="Ser-Thr/Tyr_kinase_cat_dom"/>
</dbReference>
<dbReference type="PANTHER" id="PTHR11920">
    <property type="entry name" value="GUANYLYL CYCLASE"/>
    <property type="match status" value="1"/>
</dbReference>
<dbReference type="PANTHER" id="PTHR11920:SF347">
    <property type="entry name" value="GUANYLYL CYCLASE C"/>
    <property type="match status" value="1"/>
</dbReference>
<dbReference type="Pfam" id="PF01094">
    <property type="entry name" value="ANF_receptor"/>
    <property type="match status" value="1"/>
</dbReference>
<dbReference type="Pfam" id="PF00211">
    <property type="entry name" value="Guanylate_cyc"/>
    <property type="match status" value="1"/>
</dbReference>
<dbReference type="Pfam" id="PF07714">
    <property type="entry name" value="PK_Tyr_Ser-Thr"/>
    <property type="match status" value="1"/>
</dbReference>
<dbReference type="SMART" id="SM00044">
    <property type="entry name" value="CYCc"/>
    <property type="match status" value="1"/>
</dbReference>
<dbReference type="SUPFAM" id="SSF55073">
    <property type="entry name" value="Nucleotide cyclase"/>
    <property type="match status" value="1"/>
</dbReference>
<dbReference type="SUPFAM" id="SSF53822">
    <property type="entry name" value="Periplasmic binding protein-like I"/>
    <property type="match status" value="1"/>
</dbReference>
<dbReference type="SUPFAM" id="SSF56112">
    <property type="entry name" value="Protein kinase-like (PK-like)"/>
    <property type="match status" value="1"/>
</dbReference>
<dbReference type="PROSITE" id="PS00452">
    <property type="entry name" value="GUANYLATE_CYCLASE_1"/>
    <property type="match status" value="1"/>
</dbReference>
<dbReference type="PROSITE" id="PS50125">
    <property type="entry name" value="GUANYLATE_CYCLASE_2"/>
    <property type="match status" value="1"/>
</dbReference>
<dbReference type="PROSITE" id="PS50011">
    <property type="entry name" value="PROTEIN_KINASE_DOM"/>
    <property type="match status" value="1"/>
</dbReference>
<protein>
    <recommendedName>
        <fullName>Guanylyl cyclase C</fullName>
        <shortName>GC-C</shortName>
        <ecNumber evidence="1">4.6.1.2</ecNumber>
    </recommendedName>
    <alternativeName>
        <fullName>Heat-stable enterotoxin receptor</fullName>
        <shortName>STA receptor</shortName>
    </alternativeName>
    <alternativeName>
        <fullName>Intestinal guanylate cyclase</fullName>
    </alternativeName>
</protein>
<keyword id="KW-1003">Cell membrane</keyword>
<keyword id="KW-0141">cGMP biosynthesis</keyword>
<keyword id="KW-0256">Endoplasmic reticulum</keyword>
<keyword id="KW-0325">Glycoprotein</keyword>
<keyword id="KW-0342">GTP-binding</keyword>
<keyword id="KW-0456">Lyase</keyword>
<keyword id="KW-0472">Membrane</keyword>
<keyword id="KW-0547">Nucleotide-binding</keyword>
<keyword id="KW-0675">Receptor</keyword>
<keyword id="KW-1185">Reference proteome</keyword>
<keyword id="KW-0732">Signal</keyword>
<keyword id="KW-0812">Transmembrane</keyword>
<keyword id="KW-1133">Transmembrane helix</keyword>
<organism>
    <name type="scientific">Cavia porcellus</name>
    <name type="common">Guinea pig</name>
    <dbReference type="NCBI Taxonomy" id="10141"/>
    <lineage>
        <taxon>Eukaryota</taxon>
        <taxon>Metazoa</taxon>
        <taxon>Chordata</taxon>
        <taxon>Craniata</taxon>
        <taxon>Vertebrata</taxon>
        <taxon>Euteleostomi</taxon>
        <taxon>Mammalia</taxon>
        <taxon>Eutheria</taxon>
        <taxon>Euarchontoglires</taxon>
        <taxon>Glires</taxon>
        <taxon>Rodentia</taxon>
        <taxon>Hystricomorpha</taxon>
        <taxon>Caviidae</taxon>
        <taxon>Cavia</taxon>
    </lineage>
</organism>
<name>GUC2C_CAVPO</name>
<gene>
    <name type="primary">GUCY2C</name>
    <name type="synonym">GUC2C</name>
</gene>